<comment type="function">
    <text evidence="1">Involved in amino sugar synthesis (formation of chitin, supplies the amino sugars of asparagine-linked oligosaccharides of glycoproteins).</text>
</comment>
<comment type="catalytic activity">
    <reaction>
        <text>D-fructose 6-phosphate + L-glutamine = D-glucosamine 6-phosphate + L-glutamate</text>
        <dbReference type="Rhea" id="RHEA:13237"/>
        <dbReference type="ChEBI" id="CHEBI:29985"/>
        <dbReference type="ChEBI" id="CHEBI:58359"/>
        <dbReference type="ChEBI" id="CHEBI:58725"/>
        <dbReference type="ChEBI" id="CHEBI:61527"/>
        <dbReference type="EC" id="2.6.1.16"/>
    </reaction>
</comment>
<comment type="pathway">
    <text>Nucleotide-sugar biosynthesis; UDP-N-acetyl-alpha-D-glucosamine biosynthesis; alpha-D-glucosamine 6-phosphate from D-fructose 6-phosphate: step 1/1.</text>
</comment>
<evidence type="ECO:0000250" key="1"/>
<evidence type="ECO:0000255" key="2">
    <source>
        <dbReference type="PROSITE-ProRule" id="PRU00609"/>
    </source>
</evidence>
<evidence type="ECO:0000255" key="3">
    <source>
        <dbReference type="PROSITE-ProRule" id="PRU00797"/>
    </source>
</evidence>
<feature type="initiator methionine" description="Removed" evidence="1">
    <location>
        <position position="1"/>
    </location>
</feature>
<feature type="chain" id="PRO_0000135288" description="Probable glutamine--fructose-6-phosphate aminotransferase [isomerizing]">
    <location>
        <begin position="2"/>
        <end position="696"/>
    </location>
</feature>
<feature type="domain" description="Glutamine amidotransferase type-2" evidence="2">
    <location>
        <begin position="2"/>
        <end position="303"/>
    </location>
</feature>
<feature type="domain" description="SIS 1" evidence="3">
    <location>
        <begin position="375"/>
        <end position="514"/>
    </location>
</feature>
<feature type="domain" description="SIS 2" evidence="3">
    <location>
        <begin position="547"/>
        <end position="686"/>
    </location>
</feature>
<feature type="active site" description="For GATase activity" evidence="1">
    <location>
        <position position="2"/>
    </location>
</feature>
<sequence>MCGIFGYINYLVERDRGYILKTLVKGLKRLEYRGYDSSGCAVDGDEGEDFIMFKEVGNVSKLEASIKGSNVNKSTKFINHCAISHTRWATHGIPSPINCHPQRSDPHSEFIVVHNGILTNYRELRTVLESRGMVFESETDTECVAKLAKFIYDTTPGVDFTSLAKLVFRELEGAYALLIKSSHYPGEVVATRRGSPLIVGVKSEQKLKVDFVDVEFPEPAEGLPGTPKPTSLHPVFSNPATNGMLRGDKPDLLHRAQSRAFVSGEGVPGPIEYFFASDATPIIEYTKRVMFLEDDDIAHVRDGELHVHRLRREGGGSTTRTIETLEMEIASVMKGNYDHYMIKEICEQPDSLLNTMRGRVNFVNRLVTLGGLESYYDIIRKSRRLIFVACGTSYHSCVAVRPLFEELTNIPVVVELASDFVDRCPSVFRDDTFIFVSQSGETADSLLALQYTLENGALAIGVVNCVGSSISRKTHCGVHINAGPEICVASTKAYTSQYVALVLMALYLSRDSVSRLERRNEIIDGLAEIGEKVQETLHLNAAIKQTAIEQLINKDKMLIIGRGYHYATALEGALKVKEISYTHAEGVLAGELKHGVLALVDNDMPIVMLLPDDYNFPKAWNAFEQVRARGGKPIIITDKKLDNLEGFTIIKVPKTVDCLQGILNVIPFQLLSYWLAVKRGHNVDQPRNLAKSVTVE</sequence>
<gene>
    <name type="ORF">SPBC12C2.11</name>
    <name type="ORF">SPBC21D10.02</name>
</gene>
<proteinExistence type="inferred from homology"/>
<accession>Q09740</accession>
<organism>
    <name type="scientific">Schizosaccharomyces pombe (strain 972 / ATCC 24843)</name>
    <name type="common">Fission yeast</name>
    <dbReference type="NCBI Taxonomy" id="284812"/>
    <lineage>
        <taxon>Eukaryota</taxon>
        <taxon>Fungi</taxon>
        <taxon>Dikarya</taxon>
        <taxon>Ascomycota</taxon>
        <taxon>Taphrinomycotina</taxon>
        <taxon>Schizosaccharomycetes</taxon>
        <taxon>Schizosaccharomycetales</taxon>
        <taxon>Schizosaccharomycetaceae</taxon>
        <taxon>Schizosaccharomyces</taxon>
    </lineage>
</organism>
<keyword id="KW-0032">Aminotransferase</keyword>
<keyword id="KW-0315">Glutamine amidotransferase</keyword>
<keyword id="KW-1185">Reference proteome</keyword>
<keyword id="KW-0677">Repeat</keyword>
<keyword id="KW-0808">Transferase</keyword>
<reference key="1">
    <citation type="journal article" date="2002" name="Nature">
        <title>The genome sequence of Schizosaccharomyces pombe.</title>
        <authorList>
            <person name="Wood V."/>
            <person name="Gwilliam R."/>
            <person name="Rajandream M.A."/>
            <person name="Lyne M.H."/>
            <person name="Lyne R."/>
            <person name="Stewart A."/>
            <person name="Sgouros J.G."/>
            <person name="Peat N."/>
            <person name="Hayles J."/>
            <person name="Baker S.G."/>
            <person name="Basham D."/>
            <person name="Bowman S."/>
            <person name="Brooks K."/>
            <person name="Brown D."/>
            <person name="Brown S."/>
            <person name="Chillingworth T."/>
            <person name="Churcher C.M."/>
            <person name="Collins M."/>
            <person name="Connor R."/>
            <person name="Cronin A."/>
            <person name="Davis P."/>
            <person name="Feltwell T."/>
            <person name="Fraser A."/>
            <person name="Gentles S."/>
            <person name="Goble A."/>
            <person name="Hamlin N."/>
            <person name="Harris D.E."/>
            <person name="Hidalgo J."/>
            <person name="Hodgson G."/>
            <person name="Holroyd S."/>
            <person name="Hornsby T."/>
            <person name="Howarth S."/>
            <person name="Huckle E.J."/>
            <person name="Hunt S."/>
            <person name="Jagels K."/>
            <person name="James K.D."/>
            <person name="Jones L."/>
            <person name="Jones M."/>
            <person name="Leather S."/>
            <person name="McDonald S."/>
            <person name="McLean J."/>
            <person name="Mooney P."/>
            <person name="Moule S."/>
            <person name="Mungall K.L."/>
            <person name="Murphy L.D."/>
            <person name="Niblett D."/>
            <person name="Odell C."/>
            <person name="Oliver K."/>
            <person name="O'Neil S."/>
            <person name="Pearson D."/>
            <person name="Quail M.A."/>
            <person name="Rabbinowitsch E."/>
            <person name="Rutherford K.M."/>
            <person name="Rutter S."/>
            <person name="Saunders D."/>
            <person name="Seeger K."/>
            <person name="Sharp S."/>
            <person name="Skelton J."/>
            <person name="Simmonds M.N."/>
            <person name="Squares R."/>
            <person name="Squares S."/>
            <person name="Stevens K."/>
            <person name="Taylor K."/>
            <person name="Taylor R.G."/>
            <person name="Tivey A."/>
            <person name="Walsh S.V."/>
            <person name="Warren T."/>
            <person name="Whitehead S."/>
            <person name="Woodward J.R."/>
            <person name="Volckaert G."/>
            <person name="Aert R."/>
            <person name="Robben J."/>
            <person name="Grymonprez B."/>
            <person name="Weltjens I."/>
            <person name="Vanstreels E."/>
            <person name="Rieger M."/>
            <person name="Schaefer M."/>
            <person name="Mueller-Auer S."/>
            <person name="Gabel C."/>
            <person name="Fuchs M."/>
            <person name="Duesterhoeft A."/>
            <person name="Fritzc C."/>
            <person name="Holzer E."/>
            <person name="Moestl D."/>
            <person name="Hilbert H."/>
            <person name="Borzym K."/>
            <person name="Langer I."/>
            <person name="Beck A."/>
            <person name="Lehrach H."/>
            <person name="Reinhardt R."/>
            <person name="Pohl T.M."/>
            <person name="Eger P."/>
            <person name="Zimmermann W."/>
            <person name="Wedler H."/>
            <person name="Wambutt R."/>
            <person name="Purnelle B."/>
            <person name="Goffeau A."/>
            <person name="Cadieu E."/>
            <person name="Dreano S."/>
            <person name="Gloux S."/>
            <person name="Lelaure V."/>
            <person name="Mottier S."/>
            <person name="Galibert F."/>
            <person name="Aves S.J."/>
            <person name="Xiang Z."/>
            <person name="Hunt C."/>
            <person name="Moore K."/>
            <person name="Hurst S.M."/>
            <person name="Lucas M."/>
            <person name="Rochet M."/>
            <person name="Gaillardin C."/>
            <person name="Tallada V.A."/>
            <person name="Garzon A."/>
            <person name="Thode G."/>
            <person name="Daga R.R."/>
            <person name="Cruzado L."/>
            <person name="Jimenez J."/>
            <person name="Sanchez M."/>
            <person name="del Rey F."/>
            <person name="Benito J."/>
            <person name="Dominguez A."/>
            <person name="Revuelta J.L."/>
            <person name="Moreno S."/>
            <person name="Armstrong J."/>
            <person name="Forsburg S.L."/>
            <person name="Cerutti L."/>
            <person name="Lowe T."/>
            <person name="McCombie W.R."/>
            <person name="Paulsen I."/>
            <person name="Potashkin J."/>
            <person name="Shpakovski G.V."/>
            <person name="Ussery D."/>
            <person name="Barrell B.G."/>
            <person name="Nurse P."/>
        </authorList>
    </citation>
    <scope>NUCLEOTIDE SEQUENCE [LARGE SCALE GENOMIC DNA]</scope>
    <source>
        <strain>972 / ATCC 24843</strain>
    </source>
</reference>
<dbReference type="EC" id="2.6.1.16"/>
<dbReference type="EMBL" id="CU329671">
    <property type="protein sequence ID" value="CAA20758.1"/>
    <property type="molecule type" value="Genomic_DNA"/>
</dbReference>
<dbReference type="PIR" id="T11674">
    <property type="entry name" value="T11674"/>
</dbReference>
<dbReference type="RefSeq" id="NP_596011.1">
    <property type="nucleotide sequence ID" value="NM_001021919.2"/>
</dbReference>
<dbReference type="SMR" id="Q09740"/>
<dbReference type="BioGRID" id="276179">
    <property type="interactions" value="1"/>
</dbReference>
<dbReference type="FunCoup" id="Q09740">
    <property type="interactions" value="135"/>
</dbReference>
<dbReference type="STRING" id="284812.Q09740"/>
<dbReference type="iPTMnet" id="Q09740"/>
<dbReference type="PaxDb" id="4896-SPBC12C2.11.1"/>
<dbReference type="EnsemblFungi" id="SPBC12C2.11.1">
    <property type="protein sequence ID" value="SPBC12C2.11.1:pep"/>
    <property type="gene ID" value="SPBC12C2.11"/>
</dbReference>
<dbReference type="GeneID" id="2539622"/>
<dbReference type="KEGG" id="spo:2539622"/>
<dbReference type="PomBase" id="SPBC12C2.11"/>
<dbReference type="VEuPathDB" id="FungiDB:SPBC12C2.11"/>
<dbReference type="eggNOG" id="KOG1268">
    <property type="taxonomic scope" value="Eukaryota"/>
</dbReference>
<dbReference type="HOGENOM" id="CLU_012520_5_2_1"/>
<dbReference type="InParanoid" id="Q09740"/>
<dbReference type="OMA" id="ASEYRYA"/>
<dbReference type="PhylomeDB" id="Q09740"/>
<dbReference type="Reactome" id="R-SPO-446210">
    <property type="pathway name" value="Synthesis of UDP-N-acetyl-glucosamine"/>
</dbReference>
<dbReference type="UniPathway" id="UPA00113">
    <property type="reaction ID" value="UER00528"/>
</dbReference>
<dbReference type="PRO" id="PR:Q09740"/>
<dbReference type="Proteomes" id="UP000002485">
    <property type="component" value="Chromosome II"/>
</dbReference>
<dbReference type="GO" id="GO:0005829">
    <property type="term" value="C:cytosol"/>
    <property type="evidence" value="ECO:0007005"/>
    <property type="project" value="PomBase"/>
</dbReference>
<dbReference type="GO" id="GO:0097367">
    <property type="term" value="F:carbohydrate derivative binding"/>
    <property type="evidence" value="ECO:0007669"/>
    <property type="project" value="InterPro"/>
</dbReference>
<dbReference type="GO" id="GO:0004360">
    <property type="term" value="F:glutamine-fructose-6-phosphate transaminase (isomerizing) activity"/>
    <property type="evidence" value="ECO:0000318"/>
    <property type="project" value="GO_Central"/>
</dbReference>
<dbReference type="GO" id="GO:0006031">
    <property type="term" value="P:chitin biosynthetic process"/>
    <property type="evidence" value="ECO:0000318"/>
    <property type="project" value="GO_Central"/>
</dbReference>
<dbReference type="GO" id="GO:0006002">
    <property type="term" value="P:fructose 6-phosphate metabolic process"/>
    <property type="evidence" value="ECO:0000318"/>
    <property type="project" value="GO_Central"/>
</dbReference>
<dbReference type="GO" id="GO:0006487">
    <property type="term" value="P:protein N-linked glycosylation"/>
    <property type="evidence" value="ECO:0000318"/>
    <property type="project" value="GO_Central"/>
</dbReference>
<dbReference type="GO" id="GO:0006048">
    <property type="term" value="P:UDP-N-acetylglucosamine biosynthetic process"/>
    <property type="evidence" value="ECO:0007669"/>
    <property type="project" value="UniProtKB-UniPathway"/>
</dbReference>
<dbReference type="GO" id="GO:0006047">
    <property type="term" value="P:UDP-N-acetylglucosamine metabolic process"/>
    <property type="evidence" value="ECO:0000318"/>
    <property type="project" value="GO_Central"/>
</dbReference>
<dbReference type="CDD" id="cd00714">
    <property type="entry name" value="GFAT"/>
    <property type="match status" value="1"/>
</dbReference>
<dbReference type="CDD" id="cd05008">
    <property type="entry name" value="SIS_GlmS_GlmD_1"/>
    <property type="match status" value="1"/>
</dbReference>
<dbReference type="CDD" id="cd05009">
    <property type="entry name" value="SIS_GlmS_GlmD_2"/>
    <property type="match status" value="1"/>
</dbReference>
<dbReference type="FunFam" id="3.40.50.10490:FF:000001">
    <property type="entry name" value="Glutamine--fructose-6-phosphate aminotransferase [isomerizing]"/>
    <property type="match status" value="1"/>
</dbReference>
<dbReference type="FunFam" id="3.40.50.10490:FF:000002">
    <property type="entry name" value="Glutamine--fructose-6-phosphate aminotransferase [isomerizing]"/>
    <property type="match status" value="1"/>
</dbReference>
<dbReference type="Gene3D" id="3.40.50.10490">
    <property type="entry name" value="Glucose-6-phosphate isomerase like protein, domain 1"/>
    <property type="match status" value="2"/>
</dbReference>
<dbReference type="Gene3D" id="3.60.20.10">
    <property type="entry name" value="Glutamine Phosphoribosylpyrophosphate, subunit 1, domain 1"/>
    <property type="match status" value="1"/>
</dbReference>
<dbReference type="InterPro" id="IPR017932">
    <property type="entry name" value="GATase_2_dom"/>
</dbReference>
<dbReference type="InterPro" id="IPR047084">
    <property type="entry name" value="GFAT_N"/>
</dbReference>
<dbReference type="InterPro" id="IPR035466">
    <property type="entry name" value="GlmS/AgaS_SIS"/>
</dbReference>
<dbReference type="InterPro" id="IPR035490">
    <property type="entry name" value="GlmS/FrlB_SIS"/>
</dbReference>
<dbReference type="InterPro" id="IPR029055">
    <property type="entry name" value="Ntn_hydrolases_N"/>
</dbReference>
<dbReference type="InterPro" id="IPR001347">
    <property type="entry name" value="SIS_dom"/>
</dbReference>
<dbReference type="InterPro" id="IPR046348">
    <property type="entry name" value="SIS_dom_sf"/>
</dbReference>
<dbReference type="NCBIfam" id="NF001484">
    <property type="entry name" value="PRK00331.1"/>
    <property type="match status" value="1"/>
</dbReference>
<dbReference type="PANTHER" id="PTHR10937">
    <property type="entry name" value="GLUCOSAMINE--FRUCTOSE-6-PHOSPHATE AMINOTRANSFERASE, ISOMERIZING"/>
    <property type="match status" value="1"/>
</dbReference>
<dbReference type="PANTHER" id="PTHR10937:SF0">
    <property type="entry name" value="GLUTAMINE--FRUCTOSE-6-PHOSPHATE TRANSAMINASE (ISOMERIZING)"/>
    <property type="match status" value="1"/>
</dbReference>
<dbReference type="Pfam" id="PF13522">
    <property type="entry name" value="GATase_6"/>
    <property type="match status" value="1"/>
</dbReference>
<dbReference type="Pfam" id="PF01380">
    <property type="entry name" value="SIS"/>
    <property type="match status" value="2"/>
</dbReference>
<dbReference type="SUPFAM" id="SSF56235">
    <property type="entry name" value="N-terminal nucleophile aminohydrolases (Ntn hydrolases)"/>
    <property type="match status" value="1"/>
</dbReference>
<dbReference type="SUPFAM" id="SSF53697">
    <property type="entry name" value="SIS domain"/>
    <property type="match status" value="1"/>
</dbReference>
<dbReference type="PROSITE" id="PS51278">
    <property type="entry name" value="GATASE_TYPE_2"/>
    <property type="match status" value="1"/>
</dbReference>
<dbReference type="PROSITE" id="PS51464">
    <property type="entry name" value="SIS"/>
    <property type="match status" value="2"/>
</dbReference>
<name>GFA1_SCHPO</name>
<protein>
    <recommendedName>
        <fullName>Probable glutamine--fructose-6-phosphate aminotransferase [isomerizing]</fullName>
        <shortName>GFAT</shortName>
        <ecNumber>2.6.1.16</ecNumber>
    </recommendedName>
    <alternativeName>
        <fullName>D-fructose-6-phosphate amidotransferase</fullName>
    </alternativeName>
    <alternativeName>
        <fullName>Hexosephosphate aminotransferase</fullName>
    </alternativeName>
</protein>